<keyword id="KW-0963">Cytoplasm</keyword>
<keyword id="KW-0460">Magnesium</keyword>
<keyword id="KW-0479">Metal-binding</keyword>
<keyword id="KW-0548">Nucleotidyltransferase</keyword>
<keyword id="KW-0694">RNA-binding</keyword>
<keyword id="KW-0808">Transferase</keyword>
<evidence type="ECO:0000255" key="1">
    <source>
        <dbReference type="HAMAP-Rule" id="MF_01595"/>
    </source>
</evidence>
<evidence type="ECO:0000256" key="2">
    <source>
        <dbReference type="SAM" id="MobiDB-lite"/>
    </source>
</evidence>
<name>PNP_STRS7</name>
<proteinExistence type="inferred from homology"/>
<comment type="function">
    <text evidence="1">Involved in mRNA degradation. Catalyzes the phosphorolysis of single-stranded polyribonucleotides processively in the 3'- to 5'-direction.</text>
</comment>
<comment type="catalytic activity">
    <reaction evidence="1">
        <text>RNA(n+1) + phosphate = RNA(n) + a ribonucleoside 5'-diphosphate</text>
        <dbReference type="Rhea" id="RHEA:22096"/>
        <dbReference type="Rhea" id="RHEA-COMP:14527"/>
        <dbReference type="Rhea" id="RHEA-COMP:17342"/>
        <dbReference type="ChEBI" id="CHEBI:43474"/>
        <dbReference type="ChEBI" id="CHEBI:57930"/>
        <dbReference type="ChEBI" id="CHEBI:140395"/>
        <dbReference type="EC" id="2.7.7.8"/>
    </reaction>
</comment>
<comment type="cofactor">
    <cofactor evidence="1">
        <name>Mg(2+)</name>
        <dbReference type="ChEBI" id="CHEBI:18420"/>
    </cofactor>
</comment>
<comment type="subcellular location">
    <subcellularLocation>
        <location evidence="1">Cytoplasm</location>
    </subcellularLocation>
</comment>
<comment type="similarity">
    <text evidence="1">Belongs to the polyribonucleotide nucleotidyltransferase family.</text>
</comment>
<sequence>MSKQTFTTTFAGKPLVVEVGQVAKQANGATVVRYGESTVLTAAVMSKKMSTGDFFPLQVNYEEKMYAAGKFPGGWMKREGRPSTDATLTARLIDRPIRPMFAEGFRNEVQVINTVLSYDEDASAPMAAMLGSSLALSISDIPFNGPIAGVQVAYVEGEFIINPDKAQQEASLLELTVAGTKDAINMVESGAKELPEAIMLEALLVGHKAIQELIAFQEEIVAAVGKEKAEVELLQVAADLQAEIIETYNADLQQAVQVEEKKAREAATEAVKEQVMAAYEERYAEDEEHDRIMRDVAEILEQMEHAEVRRLITEDKVRPDGRRVDEIRPLAAEIDFLPRVHGSGLFTRGQTQALSVLTLAPMGDTQIIDGLEPEYKKRFLHHYNFPQYSVGETGRYGAAGRREIGHGALGERALAQVLPSLEEFPYAIRLVAEVLESNGSSSQASICAGTLALMAGGVPIKAPVAGIAMGLISDGTNYTVLTDIQGLEDHFGDMDFKVAGTRQGITALQMDIKIEGITPQILEEALAQAKKARFEILDLIEATIAEPRPELAPTAPKIDTIKIDVDKIKVVIGKGGETIDKIIAETGVKIDIDEEGNVSIYSSDQDAINRAKEIIASLVREAKVGEVYHAKVVRIEKFGAFVNLFDKTDALVHISEIAWSRTANVSDVLEIGEEVDVKVIKVDDKGRIDASMKALVPRPPKPEKSEAKKEGKHD</sequence>
<reference key="1">
    <citation type="journal article" date="2009" name="PLoS Pathog.">
        <title>Genomic evidence for the evolution of Streptococcus equi: host restriction, increased virulence, and genetic exchange with human pathogens.</title>
        <authorList>
            <person name="Holden M.T.G."/>
            <person name="Heather Z."/>
            <person name="Paillot R."/>
            <person name="Steward K.F."/>
            <person name="Webb K."/>
            <person name="Ainslie F."/>
            <person name="Jourdan T."/>
            <person name="Bason N.C."/>
            <person name="Holroyd N.E."/>
            <person name="Mungall K."/>
            <person name="Quail M.A."/>
            <person name="Sanders M."/>
            <person name="Simmonds M."/>
            <person name="Willey D."/>
            <person name="Brooks K."/>
            <person name="Aanensen D.M."/>
            <person name="Spratt B.G."/>
            <person name="Jolley K.A."/>
            <person name="Maiden M.C.J."/>
            <person name="Kehoe M."/>
            <person name="Chanter N."/>
            <person name="Bentley S.D."/>
            <person name="Robinson C."/>
            <person name="Maskell D.J."/>
            <person name="Parkhill J."/>
            <person name="Waller A.S."/>
        </authorList>
    </citation>
    <scope>NUCLEOTIDE SEQUENCE [LARGE SCALE GENOMIC DNA]</scope>
    <source>
        <strain>H70</strain>
    </source>
</reference>
<protein>
    <recommendedName>
        <fullName evidence="1">Polyribonucleotide nucleotidyltransferase</fullName>
        <ecNumber evidence="1">2.7.7.8</ecNumber>
    </recommendedName>
    <alternativeName>
        <fullName evidence="1">Polynucleotide phosphorylase</fullName>
        <shortName evidence="1">PNPase</shortName>
    </alternativeName>
</protein>
<accession>C0MFB1</accession>
<feature type="chain" id="PRO_1000215669" description="Polyribonucleotide nucleotidyltransferase">
    <location>
        <begin position="1"/>
        <end position="714"/>
    </location>
</feature>
<feature type="domain" description="KH" evidence="1">
    <location>
        <begin position="556"/>
        <end position="615"/>
    </location>
</feature>
<feature type="domain" description="S1 motif" evidence="1">
    <location>
        <begin position="625"/>
        <end position="693"/>
    </location>
</feature>
<feature type="region of interest" description="Disordered" evidence="2">
    <location>
        <begin position="691"/>
        <end position="714"/>
    </location>
</feature>
<feature type="compositionally biased region" description="Basic and acidic residues" evidence="2">
    <location>
        <begin position="700"/>
        <end position="714"/>
    </location>
</feature>
<feature type="binding site" evidence="1">
    <location>
        <position position="489"/>
    </location>
    <ligand>
        <name>Mg(2+)</name>
        <dbReference type="ChEBI" id="CHEBI:18420"/>
    </ligand>
</feature>
<feature type="binding site" evidence="1">
    <location>
        <position position="495"/>
    </location>
    <ligand>
        <name>Mg(2+)</name>
        <dbReference type="ChEBI" id="CHEBI:18420"/>
    </ligand>
</feature>
<dbReference type="EC" id="2.7.7.8" evidence="1"/>
<dbReference type="EMBL" id="FM204884">
    <property type="protein sequence ID" value="CAW97943.1"/>
    <property type="molecule type" value="Genomic_DNA"/>
</dbReference>
<dbReference type="SMR" id="C0MFB1"/>
<dbReference type="KEGG" id="seq:SZO_02120"/>
<dbReference type="eggNOG" id="COG1185">
    <property type="taxonomic scope" value="Bacteria"/>
</dbReference>
<dbReference type="HOGENOM" id="CLU_004217_2_2_9"/>
<dbReference type="Proteomes" id="UP000001368">
    <property type="component" value="Chromosome"/>
</dbReference>
<dbReference type="GO" id="GO:0005829">
    <property type="term" value="C:cytosol"/>
    <property type="evidence" value="ECO:0007669"/>
    <property type="project" value="TreeGrafter"/>
</dbReference>
<dbReference type="GO" id="GO:0000175">
    <property type="term" value="F:3'-5'-RNA exonuclease activity"/>
    <property type="evidence" value="ECO:0007669"/>
    <property type="project" value="TreeGrafter"/>
</dbReference>
<dbReference type="GO" id="GO:0000287">
    <property type="term" value="F:magnesium ion binding"/>
    <property type="evidence" value="ECO:0007669"/>
    <property type="project" value="UniProtKB-UniRule"/>
</dbReference>
<dbReference type="GO" id="GO:0004654">
    <property type="term" value="F:polyribonucleotide nucleotidyltransferase activity"/>
    <property type="evidence" value="ECO:0007669"/>
    <property type="project" value="UniProtKB-UniRule"/>
</dbReference>
<dbReference type="GO" id="GO:0003723">
    <property type="term" value="F:RNA binding"/>
    <property type="evidence" value="ECO:0007669"/>
    <property type="project" value="UniProtKB-UniRule"/>
</dbReference>
<dbReference type="GO" id="GO:0006402">
    <property type="term" value="P:mRNA catabolic process"/>
    <property type="evidence" value="ECO:0007669"/>
    <property type="project" value="UniProtKB-UniRule"/>
</dbReference>
<dbReference type="GO" id="GO:0006396">
    <property type="term" value="P:RNA processing"/>
    <property type="evidence" value="ECO:0007669"/>
    <property type="project" value="InterPro"/>
</dbReference>
<dbReference type="CDD" id="cd02393">
    <property type="entry name" value="KH-I_PNPase"/>
    <property type="match status" value="1"/>
</dbReference>
<dbReference type="CDD" id="cd11363">
    <property type="entry name" value="RNase_PH_PNPase_1"/>
    <property type="match status" value="1"/>
</dbReference>
<dbReference type="CDD" id="cd11364">
    <property type="entry name" value="RNase_PH_PNPase_2"/>
    <property type="match status" value="1"/>
</dbReference>
<dbReference type="FunFam" id="2.40.50.140:FF:000023">
    <property type="entry name" value="Polyribonucleotide nucleotidyltransferase"/>
    <property type="match status" value="1"/>
</dbReference>
<dbReference type="FunFam" id="3.30.1370.10:FF:000001">
    <property type="entry name" value="Polyribonucleotide nucleotidyltransferase"/>
    <property type="match status" value="1"/>
</dbReference>
<dbReference type="FunFam" id="3.30.230.70:FF:000001">
    <property type="entry name" value="Polyribonucleotide nucleotidyltransferase"/>
    <property type="match status" value="1"/>
</dbReference>
<dbReference type="FunFam" id="3.30.230.70:FF:000002">
    <property type="entry name" value="Polyribonucleotide nucleotidyltransferase"/>
    <property type="match status" value="1"/>
</dbReference>
<dbReference type="Gene3D" id="3.30.230.70">
    <property type="entry name" value="GHMP Kinase, N-terminal domain"/>
    <property type="match status" value="2"/>
</dbReference>
<dbReference type="Gene3D" id="3.30.1370.10">
    <property type="entry name" value="K Homology domain, type 1"/>
    <property type="match status" value="1"/>
</dbReference>
<dbReference type="Gene3D" id="2.40.50.140">
    <property type="entry name" value="Nucleic acid-binding proteins"/>
    <property type="match status" value="1"/>
</dbReference>
<dbReference type="HAMAP" id="MF_01595">
    <property type="entry name" value="PNPase"/>
    <property type="match status" value="1"/>
</dbReference>
<dbReference type="InterPro" id="IPR001247">
    <property type="entry name" value="ExoRNase_PH_dom1"/>
</dbReference>
<dbReference type="InterPro" id="IPR015847">
    <property type="entry name" value="ExoRNase_PH_dom2"/>
</dbReference>
<dbReference type="InterPro" id="IPR036345">
    <property type="entry name" value="ExoRNase_PH_dom2_sf"/>
</dbReference>
<dbReference type="InterPro" id="IPR004087">
    <property type="entry name" value="KH_dom"/>
</dbReference>
<dbReference type="InterPro" id="IPR004088">
    <property type="entry name" value="KH_dom_type_1"/>
</dbReference>
<dbReference type="InterPro" id="IPR036612">
    <property type="entry name" value="KH_dom_type_1_sf"/>
</dbReference>
<dbReference type="InterPro" id="IPR012340">
    <property type="entry name" value="NA-bd_OB-fold"/>
</dbReference>
<dbReference type="InterPro" id="IPR012162">
    <property type="entry name" value="PNPase"/>
</dbReference>
<dbReference type="InterPro" id="IPR027408">
    <property type="entry name" value="PNPase/RNase_PH_dom_sf"/>
</dbReference>
<dbReference type="InterPro" id="IPR015848">
    <property type="entry name" value="PNPase_PH_RNA-bd_bac/org-type"/>
</dbReference>
<dbReference type="InterPro" id="IPR036456">
    <property type="entry name" value="PNPase_PH_RNA-bd_sf"/>
</dbReference>
<dbReference type="InterPro" id="IPR020568">
    <property type="entry name" value="Ribosomal_Su5_D2-typ_SF"/>
</dbReference>
<dbReference type="InterPro" id="IPR003029">
    <property type="entry name" value="S1_domain"/>
</dbReference>
<dbReference type="NCBIfam" id="TIGR03591">
    <property type="entry name" value="polynuc_phos"/>
    <property type="match status" value="1"/>
</dbReference>
<dbReference type="NCBIfam" id="NF008805">
    <property type="entry name" value="PRK11824.1"/>
    <property type="match status" value="1"/>
</dbReference>
<dbReference type="PANTHER" id="PTHR11252">
    <property type="entry name" value="POLYRIBONUCLEOTIDE NUCLEOTIDYLTRANSFERASE"/>
    <property type="match status" value="1"/>
</dbReference>
<dbReference type="PANTHER" id="PTHR11252:SF0">
    <property type="entry name" value="POLYRIBONUCLEOTIDE NUCLEOTIDYLTRANSFERASE 1, MITOCHONDRIAL"/>
    <property type="match status" value="1"/>
</dbReference>
<dbReference type="Pfam" id="PF00013">
    <property type="entry name" value="KH_1"/>
    <property type="match status" value="1"/>
</dbReference>
<dbReference type="Pfam" id="PF03726">
    <property type="entry name" value="PNPase"/>
    <property type="match status" value="1"/>
</dbReference>
<dbReference type="Pfam" id="PF01138">
    <property type="entry name" value="RNase_PH"/>
    <property type="match status" value="2"/>
</dbReference>
<dbReference type="Pfam" id="PF03725">
    <property type="entry name" value="RNase_PH_C"/>
    <property type="match status" value="2"/>
</dbReference>
<dbReference type="Pfam" id="PF00575">
    <property type="entry name" value="S1"/>
    <property type="match status" value="1"/>
</dbReference>
<dbReference type="PIRSF" id="PIRSF005499">
    <property type="entry name" value="PNPase"/>
    <property type="match status" value="1"/>
</dbReference>
<dbReference type="SMART" id="SM00322">
    <property type="entry name" value="KH"/>
    <property type="match status" value="1"/>
</dbReference>
<dbReference type="SMART" id="SM00316">
    <property type="entry name" value="S1"/>
    <property type="match status" value="1"/>
</dbReference>
<dbReference type="SUPFAM" id="SSF54791">
    <property type="entry name" value="Eukaryotic type KH-domain (KH-domain type I)"/>
    <property type="match status" value="1"/>
</dbReference>
<dbReference type="SUPFAM" id="SSF50249">
    <property type="entry name" value="Nucleic acid-binding proteins"/>
    <property type="match status" value="1"/>
</dbReference>
<dbReference type="SUPFAM" id="SSF46915">
    <property type="entry name" value="Polynucleotide phosphorylase/guanosine pentaphosphate synthase (PNPase/GPSI), domain 3"/>
    <property type="match status" value="1"/>
</dbReference>
<dbReference type="SUPFAM" id="SSF55666">
    <property type="entry name" value="Ribonuclease PH domain 2-like"/>
    <property type="match status" value="2"/>
</dbReference>
<dbReference type="SUPFAM" id="SSF54211">
    <property type="entry name" value="Ribosomal protein S5 domain 2-like"/>
    <property type="match status" value="2"/>
</dbReference>
<dbReference type="PROSITE" id="PS50084">
    <property type="entry name" value="KH_TYPE_1"/>
    <property type="match status" value="1"/>
</dbReference>
<dbReference type="PROSITE" id="PS50126">
    <property type="entry name" value="S1"/>
    <property type="match status" value="1"/>
</dbReference>
<organism>
    <name type="scientific">Streptococcus equi subsp. zooepidemicus (strain H70)</name>
    <dbReference type="NCBI Taxonomy" id="553483"/>
    <lineage>
        <taxon>Bacteria</taxon>
        <taxon>Bacillati</taxon>
        <taxon>Bacillota</taxon>
        <taxon>Bacilli</taxon>
        <taxon>Lactobacillales</taxon>
        <taxon>Streptococcaceae</taxon>
        <taxon>Streptococcus</taxon>
    </lineage>
</organism>
<gene>
    <name evidence="1" type="primary">pnp</name>
    <name type="ordered locus">SZO_02120</name>
</gene>